<dbReference type="EC" id="1.-.-.-" evidence="6"/>
<dbReference type="EMBL" id="KY764305">
    <property type="protein sequence ID" value="ARF05990.1"/>
    <property type="molecule type" value="Genomic_DNA"/>
</dbReference>
<dbReference type="SMR" id="A0A1W5T1Y4"/>
<dbReference type="GO" id="GO:0000166">
    <property type="term" value="F:nucleotide binding"/>
    <property type="evidence" value="ECO:0007669"/>
    <property type="project" value="UniProtKB-KW"/>
</dbReference>
<dbReference type="GO" id="GO:0016651">
    <property type="term" value="F:oxidoreductase activity, acting on NAD(P)H"/>
    <property type="evidence" value="ECO:0007669"/>
    <property type="project" value="InterPro"/>
</dbReference>
<dbReference type="CDD" id="cd08249">
    <property type="entry name" value="enoyl_reductase_like"/>
    <property type="match status" value="1"/>
</dbReference>
<dbReference type="Gene3D" id="3.90.180.10">
    <property type="entry name" value="Medium-chain alcohol dehydrogenases, catalytic domain"/>
    <property type="match status" value="1"/>
</dbReference>
<dbReference type="Gene3D" id="3.40.50.720">
    <property type="entry name" value="NAD(P)-binding Rossmann-like Domain"/>
    <property type="match status" value="1"/>
</dbReference>
<dbReference type="InterPro" id="IPR013154">
    <property type="entry name" value="ADH-like_N"/>
</dbReference>
<dbReference type="InterPro" id="IPR011032">
    <property type="entry name" value="GroES-like_sf"/>
</dbReference>
<dbReference type="InterPro" id="IPR036291">
    <property type="entry name" value="NAD(P)-bd_dom_sf"/>
</dbReference>
<dbReference type="InterPro" id="IPR020843">
    <property type="entry name" value="PKS_ER"/>
</dbReference>
<dbReference type="InterPro" id="IPR047122">
    <property type="entry name" value="Trans-enoyl_RdTase-like"/>
</dbReference>
<dbReference type="PANTHER" id="PTHR45348">
    <property type="entry name" value="HYPOTHETICAL OXIDOREDUCTASE (EUROFUNG)"/>
    <property type="match status" value="1"/>
</dbReference>
<dbReference type="PANTHER" id="PTHR45348:SF1">
    <property type="entry name" value="TRANS-ENOYL REDUCTASE STHE"/>
    <property type="match status" value="1"/>
</dbReference>
<dbReference type="Pfam" id="PF08240">
    <property type="entry name" value="ADH_N"/>
    <property type="match status" value="1"/>
</dbReference>
<dbReference type="SMART" id="SM00829">
    <property type="entry name" value="PKS_ER"/>
    <property type="match status" value="1"/>
</dbReference>
<dbReference type="SUPFAM" id="SSF50129">
    <property type="entry name" value="GroES-like"/>
    <property type="match status" value="1"/>
</dbReference>
<dbReference type="SUPFAM" id="SSF51735">
    <property type="entry name" value="NAD(P)-binding Rossmann-fold domains"/>
    <property type="match status" value="1"/>
</dbReference>
<organism>
    <name type="scientific">Penicillium oxalicum</name>
    <dbReference type="NCBI Taxonomy" id="69781"/>
    <lineage>
        <taxon>Eukaryota</taxon>
        <taxon>Fungi</taxon>
        <taxon>Dikarya</taxon>
        <taxon>Ascomycota</taxon>
        <taxon>Pezizomycotina</taxon>
        <taxon>Eurotiomycetes</taxon>
        <taxon>Eurotiomycetidae</taxon>
        <taxon>Eurotiales</taxon>
        <taxon>Aspergillaceae</taxon>
        <taxon>Penicillium</taxon>
    </lineage>
</organism>
<reference key="1">
    <citation type="journal article" date="2017" name="J. Am. Chem. Soc.">
        <title>Collaborative Biosynthesis of Maleimide- and Succinimide-Containing Natural Products by Fungal Polyketide Megasynthases.</title>
        <authorList>
            <person name="Sato M."/>
            <person name="Dander J.E."/>
            <person name="Sato C."/>
            <person name="Hung Y.S."/>
            <person name="Gao S.S."/>
            <person name="Tang M.C."/>
            <person name="Hang L."/>
            <person name="Winter J.M."/>
            <person name="Garg N.K."/>
            <person name="Watanabe K."/>
            <person name="Tang Y."/>
        </authorList>
    </citation>
    <scope>NUCLEOTIDE SEQUENCE [GENOMIC DNA]</scope>
    <scope>FUNCTION</scope>
    <scope>INDUCTION</scope>
    <scope>PATHWAY</scope>
    <source>
        <strain>K85</strain>
    </source>
</reference>
<reference key="2">
    <citation type="journal article" date="2020" name="Chem. Commun. (Camb.)">
        <title>Evidence for enzyme catalysed intramolecular [4+2] Diels-Alder cyclization during the biosynthesis of pyrichalasin H.</title>
        <authorList>
            <person name="Hantke V."/>
            <person name="Skellam E.J."/>
            <person name="Cox R.J."/>
        </authorList>
    </citation>
    <scope>FUNCTION</scope>
</reference>
<name>POXP_PENOX</name>
<sequence>MPVQPCSLPAGFLPAAVSLPSQQTVIAEDETGKATIYHDAPLPIPEPHMVLVKTIAVSINPCDWKMPSRFPAPGARIGCDFAGIVLSIGPEAARIRRDLRIGDRVCGGIHGSNPIDLPSGSFSQYVAAHADLLLKLPNKLSFAQGAVLGGSVFATLWIALYESLGLEGTPDMPLQDDPPPVLVYGGSTSTGTAALQILRLSGYRPIATCSPHNNDLVRAAGAEKVFDYRSETCAADIKSYTNGRLRHVLDIITDLQSQLICYDTFSRVGGKYTCLEQPAEELHLRRTVRKEMIVGLAASGKEIALADGYERTANPQLRARSGEFFQTIQRLVDEGKFVPHPTRTVEGGFEGILKCLDILKSGGTSGEKLVVFVDRENP</sequence>
<proteinExistence type="evidence at transcript level"/>
<accession>A0A1W5T1Y4</accession>
<keyword id="KW-0521">NADP</keyword>
<keyword id="KW-0547">Nucleotide-binding</keyword>
<keyword id="KW-0560">Oxidoreductase</keyword>
<gene>
    <name evidence="4" type="primary">poxP</name>
</gene>
<feature type="chain" id="PRO_0000453755" description="Trans-enoyl reductase poxP">
    <location>
        <begin position="1"/>
        <end position="378"/>
    </location>
</feature>
<feature type="binding site" evidence="1">
    <location>
        <begin position="62"/>
        <end position="65"/>
    </location>
    <ligand>
        <name>NADP(+)</name>
        <dbReference type="ChEBI" id="CHEBI:58349"/>
    </ligand>
</feature>
<feature type="binding site" evidence="2">
    <location>
        <begin position="151"/>
        <end position="158"/>
    </location>
    <ligand>
        <name>substrate</name>
    </ligand>
</feature>
<feature type="binding site" evidence="1">
    <location>
        <begin position="187"/>
        <end position="190"/>
    </location>
    <ligand>
        <name>NADP(+)</name>
        <dbReference type="ChEBI" id="CHEBI:58349"/>
    </ligand>
</feature>
<feature type="binding site" evidence="1">
    <location>
        <begin position="210"/>
        <end position="213"/>
    </location>
    <ligand>
        <name>NADP(+)</name>
        <dbReference type="ChEBI" id="CHEBI:58349"/>
    </ligand>
</feature>
<feature type="binding site" evidence="1">
    <location>
        <position position="228"/>
    </location>
    <ligand>
        <name>NADP(+)</name>
        <dbReference type="ChEBI" id="CHEBI:58349"/>
    </ligand>
</feature>
<feature type="binding site" evidence="1">
    <location>
        <begin position="275"/>
        <end position="276"/>
    </location>
    <ligand>
        <name>NADP(+)</name>
        <dbReference type="ChEBI" id="CHEBI:58349"/>
    </ligand>
</feature>
<feature type="binding site" evidence="2">
    <location>
        <begin position="295"/>
        <end position="299"/>
    </location>
    <ligand>
        <name>substrate</name>
    </ligand>
</feature>
<feature type="binding site" evidence="1">
    <location>
        <begin position="364"/>
        <end position="365"/>
    </location>
    <ligand>
        <name>NADP(+)</name>
        <dbReference type="ChEBI" id="CHEBI:58349"/>
    </ligand>
</feature>
<evidence type="ECO:0000250" key="1">
    <source>
        <dbReference type="UniProtKB" id="Q9Y7D0"/>
    </source>
</evidence>
<evidence type="ECO:0000255" key="2"/>
<evidence type="ECO:0000269" key="3">
    <source>
    </source>
</evidence>
<evidence type="ECO:0000303" key="4">
    <source>
    </source>
</evidence>
<evidence type="ECO:0000305" key="5"/>
<evidence type="ECO:0000305" key="6">
    <source>
    </source>
</evidence>
<evidence type="ECO:0000305" key="7">
    <source>
    </source>
</evidence>
<protein>
    <recommendedName>
        <fullName evidence="4">Trans-enoyl reductase poxP</fullName>
        <ecNumber evidence="6">1.-.-.-</ecNumber>
    </recommendedName>
    <alternativeName>
        <fullName evidence="4">Oxaleimides biosynthesis cluster protein P</fullName>
    </alternativeName>
</protein>
<comment type="function">
    <text evidence="3 7">Trans-enoyl reductase; part of the gene cluster that mediates the biosynthesis of oxaleimides, cytotoxic compounds containing an unusual disubstituted succinimide moiety (PubMed:28365998). The first step of the pathway is provided by the HR-PKS poxF that serves in a new mode of collaborative biosynthesis with the PKS-NRPS poxE, by providing the olefin containing amino acid substrate via the synthesis of an ACP-bound dec-4-enoate (PubMed:28365998). The cytochrome P450 monooxygenase poxM-catalyzed oxidation at the alpha-position creates the enzyme-bound 2-hydroxydec-4-enoyl-ACP thioester, which may be prone to spontaneous hydrolysis to yield 2-hydroxydec-4-enoic acid due to increased electrophilicity of the carbonyl (PubMed:28365998). 2-hydroxydec-4-enoic acid can then be further oxidized by poxM to yield the alpha-ketoacid 2-oxodec-4-enoicacid, which is reductively aminated by the aminotransferase poxL to yield (S,E)-2-aminodec-4-enoic acid (PubMed:28365998). The Hybrid PKS-NRPS synthetase poxE then performs condensation between the octaketide product of its PKS modules and the amino group of (S,E)-2-aminodec-4-enoic acid which is activated and incorporated by the adenylation domain (PubMed:28365998). The resulting aminoacyl product can be cyclized by the Diels-Alderase PoxQ and reductively released by the reductive (R) domain of poxE to yield an aldehyde intermediate (Probable) (PubMed:28365998). The released aldehyde is then substrate for a Knoevenagel condensation by the hydrolyase poxO followed by an oxidation at the 5-position of the pyrrolidone ring (PubMed:28365998). The presence of the olefin from the amino acid building block allows for migration of the substituted allyl group to occur (PubMed:28365998). This allylic transposition reaction takes place in a conjugate addition, semipinacol-like fashion to yield a succinimide intermediate (PubMed:28365998). Iterative two-electron oxidations of the C7 methyl of the succinimide intermediate to the carboxylic acid can be catalyzed by one of two remaining cytochrome P450 monooxygenasess poxC or poxD to yield oxaleimide A (PubMed:28365998). Subsequent oxidation yields the maleimide scaffold oxaleimide I (PubMed:28365998). Both oxaleimide A and oxaleimide I can undergo oxidative modifications in the decalin ring to yield the series of products oxaleimides B to H (PubMed:28365998).</text>
</comment>
<comment type="pathway">
    <text evidence="6">Secondary metabolite biosynthesis.</text>
</comment>
<comment type="subunit">
    <text evidence="1">Monomer.</text>
</comment>
<comment type="induction">
    <text evidence="3">Expression is positively regulated by the oxaleimides biosynthesis cluster-specific transcription factor poxB.</text>
</comment>
<comment type="similarity">
    <text evidence="5">Belongs to the zinc-containing alcohol dehydrogenase family.</text>
</comment>